<reference key="1">
    <citation type="journal article" date="2002" name="Nature">
        <title>Sequence and analysis of rice chromosome 4.</title>
        <authorList>
            <person name="Feng Q."/>
            <person name="Zhang Y."/>
            <person name="Hao P."/>
            <person name="Wang S."/>
            <person name="Fu G."/>
            <person name="Huang Y."/>
            <person name="Li Y."/>
            <person name="Zhu J."/>
            <person name="Liu Y."/>
            <person name="Hu X."/>
            <person name="Jia P."/>
            <person name="Zhang Y."/>
            <person name="Zhao Q."/>
            <person name="Ying K."/>
            <person name="Yu S."/>
            <person name="Tang Y."/>
            <person name="Weng Q."/>
            <person name="Zhang L."/>
            <person name="Lu Y."/>
            <person name="Mu J."/>
            <person name="Lu Y."/>
            <person name="Zhang L.S."/>
            <person name="Yu Z."/>
            <person name="Fan D."/>
            <person name="Liu X."/>
            <person name="Lu T."/>
            <person name="Li C."/>
            <person name="Wu Y."/>
            <person name="Sun T."/>
            <person name="Lei H."/>
            <person name="Li T."/>
            <person name="Hu H."/>
            <person name="Guan J."/>
            <person name="Wu M."/>
            <person name="Zhang R."/>
            <person name="Zhou B."/>
            <person name="Chen Z."/>
            <person name="Chen L."/>
            <person name="Jin Z."/>
            <person name="Wang R."/>
            <person name="Yin H."/>
            <person name="Cai Z."/>
            <person name="Ren S."/>
            <person name="Lv G."/>
            <person name="Gu W."/>
            <person name="Zhu G."/>
            <person name="Tu Y."/>
            <person name="Jia J."/>
            <person name="Zhang Y."/>
            <person name="Chen J."/>
            <person name="Kang H."/>
            <person name="Chen X."/>
            <person name="Shao C."/>
            <person name="Sun Y."/>
            <person name="Hu Q."/>
            <person name="Zhang X."/>
            <person name="Zhang W."/>
            <person name="Wang L."/>
            <person name="Ding C."/>
            <person name="Sheng H."/>
            <person name="Gu J."/>
            <person name="Chen S."/>
            <person name="Ni L."/>
            <person name="Zhu F."/>
            <person name="Chen W."/>
            <person name="Lan L."/>
            <person name="Lai Y."/>
            <person name="Cheng Z."/>
            <person name="Gu M."/>
            <person name="Jiang J."/>
            <person name="Li J."/>
            <person name="Hong G."/>
            <person name="Xue Y."/>
            <person name="Han B."/>
        </authorList>
    </citation>
    <scope>NUCLEOTIDE SEQUENCE [LARGE SCALE GENOMIC DNA]</scope>
    <source>
        <strain>cv. Guang-Lu-Ai No.4</strain>
    </source>
</reference>
<reference key="2">
    <citation type="journal article" date="2005" name="PLoS Biol.">
        <title>The genomes of Oryza sativa: a history of duplications.</title>
        <authorList>
            <person name="Yu J."/>
            <person name="Wang J."/>
            <person name="Lin W."/>
            <person name="Li S."/>
            <person name="Li H."/>
            <person name="Zhou J."/>
            <person name="Ni P."/>
            <person name="Dong W."/>
            <person name="Hu S."/>
            <person name="Zeng C."/>
            <person name="Zhang J."/>
            <person name="Zhang Y."/>
            <person name="Li R."/>
            <person name="Xu Z."/>
            <person name="Li S."/>
            <person name="Li X."/>
            <person name="Zheng H."/>
            <person name="Cong L."/>
            <person name="Lin L."/>
            <person name="Yin J."/>
            <person name="Geng J."/>
            <person name="Li G."/>
            <person name="Shi J."/>
            <person name="Liu J."/>
            <person name="Lv H."/>
            <person name="Li J."/>
            <person name="Wang J."/>
            <person name="Deng Y."/>
            <person name="Ran L."/>
            <person name="Shi X."/>
            <person name="Wang X."/>
            <person name="Wu Q."/>
            <person name="Li C."/>
            <person name="Ren X."/>
            <person name="Wang J."/>
            <person name="Wang X."/>
            <person name="Li D."/>
            <person name="Liu D."/>
            <person name="Zhang X."/>
            <person name="Ji Z."/>
            <person name="Zhao W."/>
            <person name="Sun Y."/>
            <person name="Zhang Z."/>
            <person name="Bao J."/>
            <person name="Han Y."/>
            <person name="Dong L."/>
            <person name="Ji J."/>
            <person name="Chen P."/>
            <person name="Wu S."/>
            <person name="Liu J."/>
            <person name="Xiao Y."/>
            <person name="Bu D."/>
            <person name="Tan J."/>
            <person name="Yang L."/>
            <person name="Ye C."/>
            <person name="Zhang J."/>
            <person name="Xu J."/>
            <person name="Zhou Y."/>
            <person name="Yu Y."/>
            <person name="Zhang B."/>
            <person name="Zhuang S."/>
            <person name="Wei H."/>
            <person name="Liu B."/>
            <person name="Lei M."/>
            <person name="Yu H."/>
            <person name="Li Y."/>
            <person name="Xu H."/>
            <person name="Wei S."/>
            <person name="He X."/>
            <person name="Fang L."/>
            <person name="Zhang Z."/>
            <person name="Zhang Y."/>
            <person name="Huang X."/>
            <person name="Su Z."/>
            <person name="Tong W."/>
            <person name="Li J."/>
            <person name="Tong Z."/>
            <person name="Li S."/>
            <person name="Ye J."/>
            <person name="Wang L."/>
            <person name="Fang L."/>
            <person name="Lei T."/>
            <person name="Chen C.-S."/>
            <person name="Chen H.-C."/>
            <person name="Xu Z."/>
            <person name="Li H."/>
            <person name="Huang H."/>
            <person name="Zhang F."/>
            <person name="Xu H."/>
            <person name="Li N."/>
            <person name="Zhao C."/>
            <person name="Li S."/>
            <person name="Dong L."/>
            <person name="Huang Y."/>
            <person name="Li L."/>
            <person name="Xi Y."/>
            <person name="Qi Q."/>
            <person name="Li W."/>
            <person name="Zhang B."/>
            <person name="Hu W."/>
            <person name="Zhang Y."/>
            <person name="Tian X."/>
            <person name="Jiao Y."/>
            <person name="Liang X."/>
            <person name="Jin J."/>
            <person name="Gao L."/>
            <person name="Zheng W."/>
            <person name="Hao B."/>
            <person name="Liu S.-M."/>
            <person name="Wang W."/>
            <person name="Yuan L."/>
            <person name="Cao M."/>
            <person name="McDermott J."/>
            <person name="Samudrala R."/>
            <person name="Wang J."/>
            <person name="Wong G.K.-S."/>
            <person name="Yang H."/>
        </authorList>
    </citation>
    <scope>NUCLEOTIDE SEQUENCE [LARGE SCALE GENOMIC DNA]</scope>
    <source>
        <strain>cv. 93-11</strain>
    </source>
</reference>
<sequence>MAARKNAGVLALFDVDGTLTAPRKVVTPEMLQFMKQLREHVTVGVVGGSDLVKISEQLGKSVTTDYDYCFSENGLVAHKNGELIGTQSLKSFLGDDQLKEFINFTLHYIADLDIPIKRGTFIEFRSGMLNVSPIGRNCSQEERDEFEKYDKVHNIRPKMVSVLREKFAHLNLTFSIGGQISFDVFPQGWDKTYCLRYLEEFQEIHFFGDKTYKGGNDYEIFESDRTIGHTVTSPDDTAEQCRSLFMSK</sequence>
<organism>
    <name type="scientific">Oryza sativa subsp. indica</name>
    <name type="common">Rice</name>
    <dbReference type="NCBI Taxonomy" id="39946"/>
    <lineage>
        <taxon>Eukaryota</taxon>
        <taxon>Viridiplantae</taxon>
        <taxon>Streptophyta</taxon>
        <taxon>Embryophyta</taxon>
        <taxon>Tracheophyta</taxon>
        <taxon>Spermatophyta</taxon>
        <taxon>Magnoliopsida</taxon>
        <taxon>Liliopsida</taxon>
        <taxon>Poales</taxon>
        <taxon>Poaceae</taxon>
        <taxon>BOP clade</taxon>
        <taxon>Oryzoideae</taxon>
        <taxon>Oryzeae</taxon>
        <taxon>Oryzinae</taxon>
        <taxon>Oryza</taxon>
        <taxon>Oryza sativa</taxon>
    </lineage>
</organism>
<dbReference type="EC" id="5.4.2.8" evidence="3"/>
<dbReference type="EMBL" id="AL732352">
    <property type="protein sequence ID" value="CAJ86295.1"/>
    <property type="molecule type" value="Genomic_DNA"/>
</dbReference>
<dbReference type="EMBL" id="CM000129">
    <property type="status" value="NOT_ANNOTATED_CDS"/>
    <property type="molecule type" value="Genomic_DNA"/>
</dbReference>
<dbReference type="SMR" id="Q259G4"/>
<dbReference type="STRING" id="39946.Q259G4"/>
<dbReference type="EnsemblPlants" id="OsGoSa_04g0030940.02">
    <property type="protein sequence ID" value="OsGoSa_04g0030940.02"/>
    <property type="gene ID" value="OsGoSa_04g0030940"/>
</dbReference>
<dbReference type="EnsemblPlants" id="OsIR64_04g0030530.02">
    <property type="protein sequence ID" value="OsIR64_04g0030530.02"/>
    <property type="gene ID" value="OsIR64_04g0030530"/>
</dbReference>
<dbReference type="EnsemblPlants" id="OsKYG_04g0030800.01">
    <property type="protein sequence ID" value="OsKYG_04g0030800.01"/>
    <property type="gene ID" value="OsKYG_04g0030800"/>
</dbReference>
<dbReference type="EnsemblPlants" id="OsLaMu_04g0031510.01">
    <property type="protein sequence ID" value="OsLaMu_04g0031510.01"/>
    <property type="gene ID" value="OsLaMu_04g0031510"/>
</dbReference>
<dbReference type="EnsemblPlants" id="OsLima_04g0031010.01">
    <property type="protein sequence ID" value="OsLima_04g0031010.01"/>
    <property type="gene ID" value="OsLima_04g0031010"/>
</dbReference>
<dbReference type="EnsemblPlants" id="OsLiXu_04g0031500.01">
    <property type="protein sequence ID" value="OsLiXu_04g0031500.01"/>
    <property type="gene ID" value="OsLiXu_04g0031500"/>
</dbReference>
<dbReference type="EnsemblPlants" id="OsPr106_04g0031900.01">
    <property type="protein sequence ID" value="OsPr106_04g0031900.01"/>
    <property type="gene ID" value="OsPr106_04g0031900"/>
</dbReference>
<dbReference type="EnsemblPlants" id="OsZS97_04G032040_02">
    <property type="protein sequence ID" value="OsZS97_04G032040_02"/>
    <property type="gene ID" value="OsZS97_04G032040"/>
</dbReference>
<dbReference type="Gramene" id="OsGoSa_04g0030940.02">
    <property type="protein sequence ID" value="OsGoSa_04g0030940.02"/>
    <property type="gene ID" value="OsGoSa_04g0030940"/>
</dbReference>
<dbReference type="Gramene" id="OsIR64_04g0030530.02">
    <property type="protein sequence ID" value="OsIR64_04g0030530.02"/>
    <property type="gene ID" value="OsIR64_04g0030530"/>
</dbReference>
<dbReference type="Gramene" id="OsKYG_04g0030800.01">
    <property type="protein sequence ID" value="OsKYG_04g0030800.01"/>
    <property type="gene ID" value="OsKYG_04g0030800"/>
</dbReference>
<dbReference type="Gramene" id="OsLaMu_04g0031510.01">
    <property type="protein sequence ID" value="OsLaMu_04g0031510.01"/>
    <property type="gene ID" value="OsLaMu_04g0031510"/>
</dbReference>
<dbReference type="Gramene" id="OsLima_04g0031010.01">
    <property type="protein sequence ID" value="OsLima_04g0031010.01"/>
    <property type="gene ID" value="OsLima_04g0031010"/>
</dbReference>
<dbReference type="Gramene" id="OsLiXu_04g0031500.01">
    <property type="protein sequence ID" value="OsLiXu_04g0031500.01"/>
    <property type="gene ID" value="OsLiXu_04g0031500"/>
</dbReference>
<dbReference type="Gramene" id="OsPr106_04g0031900.01">
    <property type="protein sequence ID" value="OsPr106_04g0031900.01"/>
    <property type="gene ID" value="OsPr106_04g0031900"/>
</dbReference>
<dbReference type="Gramene" id="OsZS97_04G032040_02">
    <property type="protein sequence ID" value="OsZS97_04G032040_02"/>
    <property type="gene ID" value="OsZS97_04G032040"/>
</dbReference>
<dbReference type="OrthoDB" id="10264771at2759"/>
<dbReference type="UniPathway" id="UPA00126">
    <property type="reaction ID" value="UER00424"/>
</dbReference>
<dbReference type="Proteomes" id="UP000007015">
    <property type="component" value="Chromosome 4"/>
</dbReference>
<dbReference type="GO" id="GO:0005829">
    <property type="term" value="C:cytosol"/>
    <property type="evidence" value="ECO:0007669"/>
    <property type="project" value="TreeGrafter"/>
</dbReference>
<dbReference type="GO" id="GO:0046872">
    <property type="term" value="F:metal ion binding"/>
    <property type="evidence" value="ECO:0007669"/>
    <property type="project" value="UniProtKB-KW"/>
</dbReference>
<dbReference type="GO" id="GO:0004615">
    <property type="term" value="F:phosphomannomutase activity"/>
    <property type="evidence" value="ECO:0007669"/>
    <property type="project" value="UniProtKB-EC"/>
</dbReference>
<dbReference type="GO" id="GO:0009298">
    <property type="term" value="P:GDP-mannose biosynthetic process"/>
    <property type="evidence" value="ECO:0007669"/>
    <property type="project" value="UniProtKB-UniPathway"/>
</dbReference>
<dbReference type="GO" id="GO:0006013">
    <property type="term" value="P:mannose metabolic process"/>
    <property type="evidence" value="ECO:0007669"/>
    <property type="project" value="TreeGrafter"/>
</dbReference>
<dbReference type="GO" id="GO:0006487">
    <property type="term" value="P:protein N-linked glycosylation"/>
    <property type="evidence" value="ECO:0007669"/>
    <property type="project" value="TreeGrafter"/>
</dbReference>
<dbReference type="CDD" id="cd02585">
    <property type="entry name" value="HAD_PMM"/>
    <property type="match status" value="1"/>
</dbReference>
<dbReference type="FunFam" id="3.30.1240.20:FF:000001">
    <property type="entry name" value="Phosphomannomutase"/>
    <property type="match status" value="1"/>
</dbReference>
<dbReference type="Gene3D" id="3.30.1240.20">
    <property type="match status" value="1"/>
</dbReference>
<dbReference type="Gene3D" id="3.40.50.1000">
    <property type="entry name" value="HAD superfamily/HAD-like"/>
    <property type="match status" value="1"/>
</dbReference>
<dbReference type="InterPro" id="IPR036412">
    <property type="entry name" value="HAD-like_sf"/>
</dbReference>
<dbReference type="InterPro" id="IPR006379">
    <property type="entry name" value="HAD-SF_hydro_IIB"/>
</dbReference>
<dbReference type="InterPro" id="IPR023214">
    <property type="entry name" value="HAD_sf"/>
</dbReference>
<dbReference type="InterPro" id="IPR005002">
    <property type="entry name" value="PMM"/>
</dbReference>
<dbReference type="InterPro" id="IPR043169">
    <property type="entry name" value="PMM_cap"/>
</dbReference>
<dbReference type="NCBIfam" id="TIGR01484">
    <property type="entry name" value="HAD-SF-IIB"/>
    <property type="match status" value="1"/>
</dbReference>
<dbReference type="PANTHER" id="PTHR10466">
    <property type="entry name" value="PHOSPHOMANNOMUTASE"/>
    <property type="match status" value="1"/>
</dbReference>
<dbReference type="PANTHER" id="PTHR10466:SF0">
    <property type="entry name" value="PHOSPHOMANNOMUTASE"/>
    <property type="match status" value="1"/>
</dbReference>
<dbReference type="Pfam" id="PF03332">
    <property type="entry name" value="PMM"/>
    <property type="match status" value="1"/>
</dbReference>
<dbReference type="SFLD" id="SFLDF00445">
    <property type="entry name" value="alpha-phosphomannomutase"/>
    <property type="match status" value="1"/>
</dbReference>
<dbReference type="SFLD" id="SFLDG01140">
    <property type="entry name" value="C2.B:_Phosphomannomutase_and_P"/>
    <property type="match status" value="1"/>
</dbReference>
<dbReference type="SUPFAM" id="SSF56784">
    <property type="entry name" value="HAD-like"/>
    <property type="match status" value="1"/>
</dbReference>
<gene>
    <name evidence="5" type="primary">PMM</name>
    <name evidence="6" type="ORF">H0124B04.12</name>
    <name evidence="7" type="ORF">OsI_017323</name>
</gene>
<feature type="chain" id="PRO_0000326492" description="Phosphomannomutase">
    <location>
        <begin position="1"/>
        <end position="248"/>
    </location>
</feature>
<feature type="active site" description="Nucleophile" evidence="4">
    <location>
        <position position="14"/>
    </location>
</feature>
<feature type="active site" description="Proton donor/acceptor" evidence="4">
    <location>
        <position position="16"/>
    </location>
</feature>
<feature type="binding site" evidence="4">
    <location>
        <position position="14"/>
    </location>
    <ligand>
        <name>Mg(2+)</name>
        <dbReference type="ChEBI" id="CHEBI:18420"/>
        <label>1</label>
    </ligand>
</feature>
<feature type="binding site" evidence="4">
    <location>
        <position position="16"/>
    </location>
    <ligand>
        <name>Mg(2+)</name>
        <dbReference type="ChEBI" id="CHEBI:18420"/>
        <label>1</label>
    </ligand>
</feature>
<feature type="binding site" evidence="4">
    <location>
        <position position="23"/>
    </location>
    <ligand>
        <name>alpha-D-mannose 1-phosphate</name>
        <dbReference type="ChEBI" id="CHEBI:58409"/>
    </ligand>
</feature>
<feature type="binding site" evidence="4">
    <location>
        <position position="125"/>
    </location>
    <ligand>
        <name>alpha-D-mannose 1-phosphate</name>
        <dbReference type="ChEBI" id="CHEBI:58409"/>
    </ligand>
</feature>
<feature type="binding site" evidence="4">
    <location>
        <position position="136"/>
    </location>
    <ligand>
        <name>alpha-D-mannose 1-phosphate</name>
        <dbReference type="ChEBI" id="CHEBI:58409"/>
    </ligand>
</feature>
<feature type="binding site" evidence="4">
    <location>
        <position position="143"/>
    </location>
    <ligand>
        <name>alpha-D-mannose 1-phosphate</name>
        <dbReference type="ChEBI" id="CHEBI:58409"/>
    </ligand>
</feature>
<feature type="binding site" evidence="4">
    <location>
        <position position="181"/>
    </location>
    <ligand>
        <name>alpha-D-mannose 1-phosphate</name>
        <dbReference type="ChEBI" id="CHEBI:58409"/>
    </ligand>
</feature>
<feature type="binding site" evidence="4">
    <location>
        <position position="183"/>
    </location>
    <ligand>
        <name>alpha-D-mannose 1-phosphate</name>
        <dbReference type="ChEBI" id="CHEBI:58409"/>
    </ligand>
</feature>
<feature type="binding site" evidence="2">
    <location>
        <position position="209"/>
    </location>
    <ligand>
        <name>Mg(2+)</name>
        <dbReference type="ChEBI" id="CHEBI:18420"/>
        <label>1</label>
    </ligand>
</feature>
<feature type="binding site" evidence="4">
    <location>
        <position position="221"/>
    </location>
    <ligand>
        <name>Mg(2+)</name>
        <dbReference type="ChEBI" id="CHEBI:18420"/>
        <label>2</label>
    </ligand>
</feature>
<feature type="binding site" evidence="4">
    <location>
        <position position="226"/>
    </location>
    <ligand>
        <name>Mg(2+)</name>
        <dbReference type="ChEBI" id="CHEBI:18420"/>
        <label>2</label>
    </ligand>
</feature>
<name>PMM_ORYSI</name>
<comment type="function">
    <text evidence="3 5">Catalyzes the interconversion of mannose-6-phosphate to mannose-1-phosphate, the precursor for the synthesis of GDP-mannose (By similarity). GDP-mannose is an essential sugar nucleotide for the synthesis of D-mannose-containing cell wall polysaccharides (galactomannans and glucomannans), glycolipids, glycoproteins and the antioxidant L-ascorbate (Probable).</text>
</comment>
<comment type="catalytic activity">
    <reaction evidence="3">
        <text>alpha-D-mannose 1-phosphate = D-mannose 6-phosphate</text>
        <dbReference type="Rhea" id="RHEA:11140"/>
        <dbReference type="ChEBI" id="CHEBI:58409"/>
        <dbReference type="ChEBI" id="CHEBI:58735"/>
        <dbReference type="EC" id="5.4.2.8"/>
    </reaction>
</comment>
<comment type="cofactor">
    <cofactor evidence="4">
        <name>Mg(2+)</name>
        <dbReference type="ChEBI" id="CHEBI:18420"/>
    </cofactor>
</comment>
<comment type="pathway">
    <text evidence="5">Nucleotide-sugar biosynthesis; GDP-alpha-D-mannose biosynthesis; alpha-D-mannose 1-phosphate from D-fructose 6-phosphate: step 2/2.</text>
</comment>
<comment type="subunit">
    <text evidence="4">Homodimer.</text>
</comment>
<comment type="subcellular location">
    <subcellularLocation>
        <location evidence="1">Cytoplasm</location>
    </subcellularLocation>
</comment>
<comment type="similarity">
    <text evidence="5">Belongs to the eukaryotic PMM family.</text>
</comment>
<evidence type="ECO:0000250" key="1">
    <source>
        <dbReference type="UniProtKB" id="A0A0U1WZ18"/>
    </source>
</evidence>
<evidence type="ECO:0000250" key="2">
    <source>
        <dbReference type="UniProtKB" id="P31353"/>
    </source>
</evidence>
<evidence type="ECO:0000250" key="3">
    <source>
        <dbReference type="UniProtKB" id="Q7XPW5"/>
    </source>
</evidence>
<evidence type="ECO:0000250" key="4">
    <source>
        <dbReference type="UniProtKB" id="Q92871"/>
    </source>
</evidence>
<evidence type="ECO:0000305" key="5"/>
<evidence type="ECO:0000312" key="6">
    <source>
        <dbReference type="EMBL" id="CAJ86295.1"/>
    </source>
</evidence>
<evidence type="ECO:0000312" key="7">
    <source>
        <dbReference type="EMBL" id="CM000129"/>
    </source>
</evidence>
<keyword id="KW-0963">Cytoplasm</keyword>
<keyword id="KW-0413">Isomerase</keyword>
<keyword id="KW-0460">Magnesium</keyword>
<keyword id="KW-0479">Metal-binding</keyword>
<keyword id="KW-1185">Reference proteome</keyword>
<accession>Q259G4</accession>
<accession>A2XZ30</accession>
<protein>
    <recommendedName>
        <fullName evidence="5">Phosphomannomutase</fullName>
        <shortName evidence="5">OsPMM</shortName>
        <ecNumber evidence="3">5.4.2.8</ecNumber>
    </recommendedName>
</protein>
<proteinExistence type="inferred from homology"/>